<organism>
    <name type="scientific">Reclinomonas americana</name>
    <dbReference type="NCBI Taxonomy" id="48483"/>
    <lineage>
        <taxon>Eukaryota</taxon>
        <taxon>Discoba</taxon>
        <taxon>Jakobida</taxon>
        <taxon>Histionina</taxon>
        <taxon>Histionidae</taxon>
        <taxon>Reclinomonas</taxon>
    </lineage>
</organism>
<accession>O21256</accession>
<sequence length="96" mass="11435">MDHKLYLRIKKTNQHLYAYVLYKGKQLVTVSTNQKIIRNDINKVNKKIYPEILGYLLSDKIKEFGFLNIYLKRTYLFHGKVKTIVDVLRKNGVVIY</sequence>
<feature type="chain" id="PRO_0000131430" description="Large ribosomal subunit protein uL18m">
    <location>
        <begin position="1"/>
        <end position="96"/>
    </location>
</feature>
<comment type="subcellular location">
    <subcellularLocation>
        <location>Mitochondrion</location>
    </subcellularLocation>
</comment>
<comment type="similarity">
    <text evidence="1">Belongs to the universal ribosomal protein uL18 family.</text>
</comment>
<protein>
    <recommendedName>
        <fullName evidence="1">Large ribosomal subunit protein uL18m</fullName>
    </recommendedName>
    <alternativeName>
        <fullName>60S ribosomal protein L18, mitochondrial</fullName>
    </alternativeName>
</protein>
<evidence type="ECO:0000305" key="1"/>
<keyword id="KW-0496">Mitochondrion</keyword>
<keyword id="KW-0687">Ribonucleoprotein</keyword>
<keyword id="KW-0689">Ribosomal protein</keyword>
<reference key="1">
    <citation type="journal article" date="1997" name="Nature">
        <title>An ancestral mitochondrial DNA resembling a eubacterial genome in miniature.</title>
        <authorList>
            <person name="Lang B.F."/>
            <person name="Burger G."/>
            <person name="O'Kelly C.J."/>
            <person name="Cedergren R."/>
            <person name="Golding G.B."/>
            <person name="Lemieux C."/>
            <person name="Sankoff D."/>
            <person name="Turmel M."/>
            <person name="Gray M.W."/>
        </authorList>
    </citation>
    <scope>NUCLEOTIDE SEQUENCE [GENOMIC DNA]</scope>
    <source>
        <strain>ATCC 50394</strain>
    </source>
</reference>
<proteinExistence type="inferred from homology"/>
<geneLocation type="mitochondrion"/>
<gene>
    <name type="primary">RPL18</name>
</gene>
<dbReference type="EMBL" id="AF007261">
    <property type="protein sequence ID" value="AAD11883.1"/>
    <property type="molecule type" value="Genomic_DNA"/>
</dbReference>
<dbReference type="PIR" id="S78150">
    <property type="entry name" value="S78150"/>
</dbReference>
<dbReference type="RefSeq" id="NP_044768.1">
    <property type="nucleotide sequence ID" value="NC_001823.1"/>
</dbReference>
<dbReference type="SMR" id="O21256"/>
<dbReference type="GeneID" id="801105"/>
<dbReference type="GO" id="GO:0005739">
    <property type="term" value="C:mitochondrion"/>
    <property type="evidence" value="ECO:0007669"/>
    <property type="project" value="UniProtKB-SubCell"/>
</dbReference>
<dbReference type="GO" id="GO:1990904">
    <property type="term" value="C:ribonucleoprotein complex"/>
    <property type="evidence" value="ECO:0007669"/>
    <property type="project" value="UniProtKB-KW"/>
</dbReference>
<dbReference type="GO" id="GO:0005840">
    <property type="term" value="C:ribosome"/>
    <property type="evidence" value="ECO:0007669"/>
    <property type="project" value="UniProtKB-KW"/>
</dbReference>
<dbReference type="GO" id="GO:0003735">
    <property type="term" value="F:structural constituent of ribosome"/>
    <property type="evidence" value="ECO:0007669"/>
    <property type="project" value="InterPro"/>
</dbReference>
<dbReference type="GO" id="GO:0006412">
    <property type="term" value="P:translation"/>
    <property type="evidence" value="ECO:0007669"/>
    <property type="project" value="InterPro"/>
</dbReference>
<dbReference type="Gene3D" id="3.30.420.100">
    <property type="match status" value="1"/>
</dbReference>
<dbReference type="InterPro" id="IPR005484">
    <property type="entry name" value="Ribosomal_uL18_bac/euk"/>
</dbReference>
<dbReference type="Pfam" id="PF00861">
    <property type="entry name" value="Ribosomal_L18p"/>
    <property type="match status" value="1"/>
</dbReference>
<dbReference type="SUPFAM" id="SSF53137">
    <property type="entry name" value="Translational machinery components"/>
    <property type="match status" value="1"/>
</dbReference>
<name>RM18_RECAM</name>